<gene>
    <name evidence="1" type="primary">trpD</name>
    <name type="ordered locus">Teth514_1867</name>
</gene>
<keyword id="KW-0028">Amino-acid biosynthesis</keyword>
<keyword id="KW-0057">Aromatic amino acid biosynthesis</keyword>
<keyword id="KW-0328">Glycosyltransferase</keyword>
<keyword id="KW-0460">Magnesium</keyword>
<keyword id="KW-0479">Metal-binding</keyword>
<keyword id="KW-0808">Transferase</keyword>
<keyword id="KW-0822">Tryptophan biosynthesis</keyword>
<reference key="1">
    <citation type="submission" date="2008-01" db="EMBL/GenBank/DDBJ databases">
        <title>Complete sequence of Thermoanaerobacter sp. X514.</title>
        <authorList>
            <consortium name="US DOE Joint Genome Institute"/>
            <person name="Copeland A."/>
            <person name="Lucas S."/>
            <person name="Lapidus A."/>
            <person name="Barry K."/>
            <person name="Glavina del Rio T."/>
            <person name="Dalin E."/>
            <person name="Tice H."/>
            <person name="Pitluck S."/>
            <person name="Bruce D."/>
            <person name="Goodwin L."/>
            <person name="Saunders E."/>
            <person name="Brettin T."/>
            <person name="Detter J.C."/>
            <person name="Han C."/>
            <person name="Schmutz J."/>
            <person name="Larimer F."/>
            <person name="Land M."/>
            <person name="Hauser L."/>
            <person name="Kyrpides N."/>
            <person name="Kim E."/>
            <person name="Hemme C."/>
            <person name="Fields M.W."/>
            <person name="He Z."/>
            <person name="Zhou J."/>
            <person name="Richardson P."/>
        </authorList>
    </citation>
    <scope>NUCLEOTIDE SEQUENCE [LARGE SCALE GENOMIC DNA]</scope>
    <source>
        <strain>X514</strain>
    </source>
</reference>
<proteinExistence type="inferred from homology"/>
<evidence type="ECO:0000255" key="1">
    <source>
        <dbReference type="HAMAP-Rule" id="MF_00211"/>
    </source>
</evidence>
<dbReference type="EC" id="2.4.2.18" evidence="1"/>
<dbReference type="EMBL" id="CP000923">
    <property type="protein sequence ID" value="ABY93147.1"/>
    <property type="molecule type" value="Genomic_DNA"/>
</dbReference>
<dbReference type="RefSeq" id="WP_003867686.1">
    <property type="nucleotide sequence ID" value="NC_010320.1"/>
</dbReference>
<dbReference type="SMR" id="B0K2U2"/>
<dbReference type="KEGG" id="tex:Teth514_1867"/>
<dbReference type="HOGENOM" id="CLU_034315_2_1_9"/>
<dbReference type="UniPathway" id="UPA00035">
    <property type="reaction ID" value="UER00041"/>
</dbReference>
<dbReference type="Proteomes" id="UP000002155">
    <property type="component" value="Chromosome"/>
</dbReference>
<dbReference type="GO" id="GO:0005829">
    <property type="term" value="C:cytosol"/>
    <property type="evidence" value="ECO:0007669"/>
    <property type="project" value="TreeGrafter"/>
</dbReference>
<dbReference type="GO" id="GO:0004048">
    <property type="term" value="F:anthranilate phosphoribosyltransferase activity"/>
    <property type="evidence" value="ECO:0007669"/>
    <property type="project" value="UniProtKB-UniRule"/>
</dbReference>
<dbReference type="GO" id="GO:0000287">
    <property type="term" value="F:magnesium ion binding"/>
    <property type="evidence" value="ECO:0007669"/>
    <property type="project" value="UniProtKB-UniRule"/>
</dbReference>
<dbReference type="GO" id="GO:0000162">
    <property type="term" value="P:L-tryptophan biosynthetic process"/>
    <property type="evidence" value="ECO:0007669"/>
    <property type="project" value="UniProtKB-UniRule"/>
</dbReference>
<dbReference type="FunFam" id="3.40.1030.10:FF:000002">
    <property type="entry name" value="Anthranilate phosphoribosyltransferase"/>
    <property type="match status" value="1"/>
</dbReference>
<dbReference type="Gene3D" id="3.40.1030.10">
    <property type="entry name" value="Nucleoside phosphorylase/phosphoribosyltransferase catalytic domain"/>
    <property type="match status" value="1"/>
</dbReference>
<dbReference type="Gene3D" id="1.20.970.10">
    <property type="entry name" value="Transferase, Pyrimidine Nucleoside Phosphorylase, Chain C"/>
    <property type="match status" value="1"/>
</dbReference>
<dbReference type="HAMAP" id="MF_00211">
    <property type="entry name" value="TrpD"/>
    <property type="match status" value="1"/>
</dbReference>
<dbReference type="InterPro" id="IPR005940">
    <property type="entry name" value="Anthranilate_Pribosyl_Tfrase"/>
</dbReference>
<dbReference type="InterPro" id="IPR000312">
    <property type="entry name" value="Glycosyl_Trfase_fam3"/>
</dbReference>
<dbReference type="InterPro" id="IPR017459">
    <property type="entry name" value="Glycosyl_Trfase_fam3_N_dom"/>
</dbReference>
<dbReference type="InterPro" id="IPR036320">
    <property type="entry name" value="Glycosyl_Trfase_fam3_N_dom_sf"/>
</dbReference>
<dbReference type="InterPro" id="IPR035902">
    <property type="entry name" value="Nuc_phospho_transferase"/>
</dbReference>
<dbReference type="NCBIfam" id="TIGR01245">
    <property type="entry name" value="trpD"/>
    <property type="match status" value="1"/>
</dbReference>
<dbReference type="PANTHER" id="PTHR43285">
    <property type="entry name" value="ANTHRANILATE PHOSPHORIBOSYLTRANSFERASE"/>
    <property type="match status" value="1"/>
</dbReference>
<dbReference type="PANTHER" id="PTHR43285:SF2">
    <property type="entry name" value="ANTHRANILATE PHOSPHORIBOSYLTRANSFERASE"/>
    <property type="match status" value="1"/>
</dbReference>
<dbReference type="Pfam" id="PF02885">
    <property type="entry name" value="Glycos_trans_3N"/>
    <property type="match status" value="1"/>
</dbReference>
<dbReference type="Pfam" id="PF00591">
    <property type="entry name" value="Glycos_transf_3"/>
    <property type="match status" value="1"/>
</dbReference>
<dbReference type="SUPFAM" id="SSF52418">
    <property type="entry name" value="Nucleoside phosphorylase/phosphoribosyltransferase catalytic domain"/>
    <property type="match status" value="1"/>
</dbReference>
<dbReference type="SUPFAM" id="SSF47648">
    <property type="entry name" value="Nucleoside phosphorylase/phosphoribosyltransferase N-terminal domain"/>
    <property type="match status" value="1"/>
</dbReference>
<accession>B0K2U2</accession>
<organism>
    <name type="scientific">Thermoanaerobacter sp. (strain X514)</name>
    <dbReference type="NCBI Taxonomy" id="399726"/>
    <lineage>
        <taxon>Bacteria</taxon>
        <taxon>Bacillati</taxon>
        <taxon>Bacillota</taxon>
        <taxon>Clostridia</taxon>
        <taxon>Thermoanaerobacterales</taxon>
        <taxon>Thermoanaerobacteraceae</taxon>
        <taxon>Thermoanaerobacter</taxon>
    </lineage>
</organism>
<feature type="chain" id="PRO_1000099854" description="Anthranilate phosphoribosyltransferase">
    <location>
        <begin position="1"/>
        <end position="338"/>
    </location>
</feature>
<feature type="binding site" evidence="1">
    <location>
        <position position="80"/>
    </location>
    <ligand>
        <name>5-phospho-alpha-D-ribose 1-diphosphate</name>
        <dbReference type="ChEBI" id="CHEBI:58017"/>
    </ligand>
</feature>
<feature type="binding site" evidence="1">
    <location>
        <position position="80"/>
    </location>
    <ligand>
        <name>anthranilate</name>
        <dbReference type="ChEBI" id="CHEBI:16567"/>
        <label>1</label>
    </ligand>
</feature>
<feature type="binding site" evidence="1">
    <location>
        <begin position="83"/>
        <end position="84"/>
    </location>
    <ligand>
        <name>5-phospho-alpha-D-ribose 1-diphosphate</name>
        <dbReference type="ChEBI" id="CHEBI:58017"/>
    </ligand>
</feature>
<feature type="binding site" evidence="1">
    <location>
        <position position="88"/>
    </location>
    <ligand>
        <name>5-phospho-alpha-D-ribose 1-diphosphate</name>
        <dbReference type="ChEBI" id="CHEBI:58017"/>
    </ligand>
</feature>
<feature type="binding site" evidence="1">
    <location>
        <begin position="90"/>
        <end position="93"/>
    </location>
    <ligand>
        <name>5-phospho-alpha-D-ribose 1-diphosphate</name>
        <dbReference type="ChEBI" id="CHEBI:58017"/>
    </ligand>
</feature>
<feature type="binding site" evidence="1">
    <location>
        <position position="92"/>
    </location>
    <ligand>
        <name>Mg(2+)</name>
        <dbReference type="ChEBI" id="CHEBI:18420"/>
        <label>1</label>
    </ligand>
</feature>
<feature type="binding site" evidence="1">
    <location>
        <begin position="108"/>
        <end position="116"/>
    </location>
    <ligand>
        <name>5-phospho-alpha-D-ribose 1-diphosphate</name>
        <dbReference type="ChEBI" id="CHEBI:58017"/>
    </ligand>
</feature>
<feature type="binding site" evidence="1">
    <location>
        <position position="111"/>
    </location>
    <ligand>
        <name>anthranilate</name>
        <dbReference type="ChEBI" id="CHEBI:16567"/>
        <label>1</label>
    </ligand>
</feature>
<feature type="binding site" evidence="1">
    <location>
        <position position="120"/>
    </location>
    <ligand>
        <name>5-phospho-alpha-D-ribose 1-diphosphate</name>
        <dbReference type="ChEBI" id="CHEBI:58017"/>
    </ligand>
</feature>
<feature type="binding site" evidence="1">
    <location>
        <position position="166"/>
    </location>
    <ligand>
        <name>anthranilate</name>
        <dbReference type="ChEBI" id="CHEBI:16567"/>
        <label>2</label>
    </ligand>
</feature>
<feature type="binding site" evidence="1">
    <location>
        <position position="225"/>
    </location>
    <ligand>
        <name>Mg(2+)</name>
        <dbReference type="ChEBI" id="CHEBI:18420"/>
        <label>2</label>
    </ligand>
</feature>
<feature type="binding site" evidence="1">
    <location>
        <position position="226"/>
    </location>
    <ligand>
        <name>Mg(2+)</name>
        <dbReference type="ChEBI" id="CHEBI:18420"/>
        <label>1</label>
    </ligand>
</feature>
<feature type="binding site" evidence="1">
    <location>
        <position position="226"/>
    </location>
    <ligand>
        <name>Mg(2+)</name>
        <dbReference type="ChEBI" id="CHEBI:18420"/>
        <label>2</label>
    </ligand>
</feature>
<comment type="function">
    <text evidence="1">Catalyzes the transfer of the phosphoribosyl group of 5-phosphorylribose-1-pyrophosphate (PRPP) to anthranilate to yield N-(5'-phosphoribosyl)-anthranilate (PRA).</text>
</comment>
<comment type="catalytic activity">
    <reaction evidence="1">
        <text>N-(5-phospho-beta-D-ribosyl)anthranilate + diphosphate = 5-phospho-alpha-D-ribose 1-diphosphate + anthranilate</text>
        <dbReference type="Rhea" id="RHEA:11768"/>
        <dbReference type="ChEBI" id="CHEBI:16567"/>
        <dbReference type="ChEBI" id="CHEBI:18277"/>
        <dbReference type="ChEBI" id="CHEBI:33019"/>
        <dbReference type="ChEBI" id="CHEBI:58017"/>
        <dbReference type="EC" id="2.4.2.18"/>
    </reaction>
</comment>
<comment type="cofactor">
    <cofactor evidence="1">
        <name>Mg(2+)</name>
        <dbReference type="ChEBI" id="CHEBI:18420"/>
    </cofactor>
    <text evidence="1">Binds 2 magnesium ions per monomer.</text>
</comment>
<comment type="pathway">
    <text evidence="1">Amino-acid biosynthesis; L-tryptophan biosynthesis; L-tryptophan from chorismate: step 2/5.</text>
</comment>
<comment type="subunit">
    <text evidence="1">Homodimer.</text>
</comment>
<comment type="similarity">
    <text evidence="1">Belongs to the anthranilate phosphoribosyltransferase family.</text>
</comment>
<protein>
    <recommendedName>
        <fullName evidence="1">Anthranilate phosphoribosyltransferase</fullName>
        <ecNumber evidence="1">2.4.2.18</ecNumber>
    </recommendedName>
</protein>
<sequence length="338" mass="36582">MLQEAIKKIVSKENLEEREAYAVMNEIMSGNATPSLIGGILIGLRLKGESVEEITGFAKAMRDNAIKLELASDYVIDTCGTGGDGGKTFNISTAVAIIASAAGVKVAKHGNRAVSSKSGSADVLMELGFDIEMVPEKTKRLIEEKGMGFLFAPKYHVAMKNVAGIRKELGTRTVFNVLGPLTNPAFVKGQVLGVYDKELTHPLAEVLLRLGTEKAMVVHGFDGLDEITTTSPTFVSEVKEGKVIDYVIDPEDYGIPYAKLEDLEGKDAKENAQIILNILKGEKGPKRDIVVLNAAAALYIGKVVEDLKEGIKVANYLIDTGLALDKLTEILEYQRRLN</sequence>
<name>TRPD_THEPX</name>